<name>MOAC_STAA3</name>
<organism>
    <name type="scientific">Staphylococcus aureus (strain USA300)</name>
    <dbReference type="NCBI Taxonomy" id="367830"/>
    <lineage>
        <taxon>Bacteria</taxon>
        <taxon>Bacillati</taxon>
        <taxon>Bacillota</taxon>
        <taxon>Bacilli</taxon>
        <taxon>Bacillales</taxon>
        <taxon>Staphylococcaceae</taxon>
        <taxon>Staphylococcus</taxon>
    </lineage>
</organism>
<sequence>MTEFTHINQQGHAKMVDVSDKQITKRTAVAHSSITVNETIFKQISNNTNTKGNVLNTAQIAGIMAAKNTSTLIPMCHPLPLTGIDVHFSWDETNAPLYTLNIQTTVSTTGKTGVEMEALTAASATALTIYDMTKAVDKGMIIGETYLESKSGGKSGDFQRQSNQ</sequence>
<feature type="chain" id="PRO_1000054150" description="Cyclic pyranopterin monophosphate synthase">
    <location>
        <begin position="1"/>
        <end position="164"/>
    </location>
</feature>
<feature type="active site" evidence="1">
    <location>
        <position position="131"/>
    </location>
</feature>
<feature type="binding site" evidence="1">
    <location>
        <begin position="75"/>
        <end position="77"/>
    </location>
    <ligand>
        <name>substrate</name>
    </ligand>
</feature>
<feature type="binding site" evidence="1">
    <location>
        <begin position="116"/>
        <end position="117"/>
    </location>
    <ligand>
        <name>substrate</name>
    </ligand>
</feature>
<dbReference type="EC" id="4.6.1.17" evidence="1"/>
<dbReference type="EMBL" id="CP000255">
    <property type="protein sequence ID" value="ABD22128.1"/>
    <property type="molecule type" value="Genomic_DNA"/>
</dbReference>
<dbReference type="RefSeq" id="WP_000134528.1">
    <property type="nucleotide sequence ID" value="NZ_CP027476.1"/>
</dbReference>
<dbReference type="SMR" id="Q2FEL8"/>
<dbReference type="KEGG" id="saa:SAUSA300_2225"/>
<dbReference type="HOGENOM" id="CLU_074693_1_1_9"/>
<dbReference type="OMA" id="IWDMVKS"/>
<dbReference type="UniPathway" id="UPA00344"/>
<dbReference type="Proteomes" id="UP000001939">
    <property type="component" value="Chromosome"/>
</dbReference>
<dbReference type="GO" id="GO:0061799">
    <property type="term" value="F:cyclic pyranopterin monophosphate synthase activity"/>
    <property type="evidence" value="ECO:0007669"/>
    <property type="project" value="UniProtKB-UniRule"/>
</dbReference>
<dbReference type="GO" id="GO:0006777">
    <property type="term" value="P:Mo-molybdopterin cofactor biosynthetic process"/>
    <property type="evidence" value="ECO:0007669"/>
    <property type="project" value="UniProtKB-UniRule"/>
</dbReference>
<dbReference type="CDD" id="cd01420">
    <property type="entry name" value="MoaC_PE"/>
    <property type="match status" value="1"/>
</dbReference>
<dbReference type="Gene3D" id="3.30.70.640">
    <property type="entry name" value="Molybdopterin cofactor biosynthesis C (MoaC) domain"/>
    <property type="match status" value="1"/>
</dbReference>
<dbReference type="HAMAP" id="MF_01224_B">
    <property type="entry name" value="MoaC_B"/>
    <property type="match status" value="1"/>
</dbReference>
<dbReference type="InterPro" id="IPR023045">
    <property type="entry name" value="MoaC"/>
</dbReference>
<dbReference type="InterPro" id="IPR047594">
    <property type="entry name" value="MoaC_bact/euk"/>
</dbReference>
<dbReference type="InterPro" id="IPR036522">
    <property type="entry name" value="MoaC_sf"/>
</dbReference>
<dbReference type="InterPro" id="IPR050105">
    <property type="entry name" value="MoCo_biosynth_MoaA/MoaC"/>
</dbReference>
<dbReference type="InterPro" id="IPR002820">
    <property type="entry name" value="Mopterin_CF_biosynth-C_dom"/>
</dbReference>
<dbReference type="NCBIfam" id="TIGR00581">
    <property type="entry name" value="moaC"/>
    <property type="match status" value="1"/>
</dbReference>
<dbReference type="NCBIfam" id="NF006870">
    <property type="entry name" value="PRK09364.1"/>
    <property type="match status" value="1"/>
</dbReference>
<dbReference type="PANTHER" id="PTHR22960">
    <property type="entry name" value="MOLYBDOPTERIN COFACTOR SYNTHESIS PROTEIN A"/>
    <property type="match status" value="1"/>
</dbReference>
<dbReference type="Pfam" id="PF01967">
    <property type="entry name" value="MoaC"/>
    <property type="match status" value="1"/>
</dbReference>
<dbReference type="SUPFAM" id="SSF55040">
    <property type="entry name" value="Molybdenum cofactor biosynthesis protein C, MoaC"/>
    <property type="match status" value="1"/>
</dbReference>
<gene>
    <name evidence="1" type="primary">moaC</name>
    <name type="ordered locus">SAUSA300_2225</name>
</gene>
<keyword id="KW-0456">Lyase</keyword>
<keyword id="KW-0501">Molybdenum cofactor biosynthesis</keyword>
<comment type="function">
    <text evidence="1">Catalyzes the conversion of (8S)-3',8-cyclo-7,8-dihydroguanosine 5'-triphosphate to cyclic pyranopterin monophosphate (cPMP).</text>
</comment>
<comment type="catalytic activity">
    <reaction evidence="1">
        <text>(8S)-3',8-cyclo-7,8-dihydroguanosine 5'-triphosphate = cyclic pyranopterin phosphate + diphosphate</text>
        <dbReference type="Rhea" id="RHEA:49580"/>
        <dbReference type="ChEBI" id="CHEBI:33019"/>
        <dbReference type="ChEBI" id="CHEBI:59648"/>
        <dbReference type="ChEBI" id="CHEBI:131766"/>
        <dbReference type="EC" id="4.6.1.17"/>
    </reaction>
</comment>
<comment type="pathway">
    <text evidence="1">Cofactor biosynthesis; molybdopterin biosynthesis.</text>
</comment>
<comment type="subunit">
    <text evidence="1">Homohexamer; trimer of dimers.</text>
</comment>
<comment type="similarity">
    <text evidence="1">Belongs to the MoaC family.</text>
</comment>
<proteinExistence type="inferred from homology"/>
<reference key="1">
    <citation type="journal article" date="2006" name="Lancet">
        <title>Complete genome sequence of USA300, an epidemic clone of community-acquired meticillin-resistant Staphylococcus aureus.</title>
        <authorList>
            <person name="Diep B.A."/>
            <person name="Gill S.R."/>
            <person name="Chang R.F."/>
            <person name="Phan T.H."/>
            <person name="Chen J.H."/>
            <person name="Davidson M.G."/>
            <person name="Lin F."/>
            <person name="Lin J."/>
            <person name="Carleton H.A."/>
            <person name="Mongodin E.F."/>
            <person name="Sensabaugh G.F."/>
            <person name="Perdreau-Remington F."/>
        </authorList>
    </citation>
    <scope>NUCLEOTIDE SEQUENCE [LARGE SCALE GENOMIC DNA]</scope>
    <source>
        <strain>USA300</strain>
    </source>
</reference>
<protein>
    <recommendedName>
        <fullName evidence="1">Cyclic pyranopterin monophosphate synthase</fullName>
        <ecNumber evidence="1">4.6.1.17</ecNumber>
    </recommendedName>
    <alternativeName>
        <fullName evidence="1">Molybdenum cofactor biosynthesis protein C</fullName>
    </alternativeName>
</protein>
<accession>Q2FEL8</accession>
<evidence type="ECO:0000255" key="1">
    <source>
        <dbReference type="HAMAP-Rule" id="MF_01224"/>
    </source>
</evidence>